<evidence type="ECO:0000250" key="1"/>
<evidence type="ECO:0000250" key="2">
    <source>
        <dbReference type="UniProtKB" id="Q9UKV8"/>
    </source>
</evidence>
<evidence type="ECO:0000255" key="3">
    <source>
        <dbReference type="PROSITE-ProRule" id="PRU00142"/>
    </source>
</evidence>
<evidence type="ECO:0000255" key="4">
    <source>
        <dbReference type="PROSITE-ProRule" id="PRU00150"/>
    </source>
</evidence>
<evidence type="ECO:0000269" key="5">
    <source>
    </source>
</evidence>
<evidence type="ECO:0000305" key="6"/>
<gene>
    <name type="primary">Ago1</name>
    <name type="synonym">Eif2c1</name>
</gene>
<proteinExistence type="evidence at protein level"/>
<sequence length="857" mass="97214">MEAGPSGAAAGAYLPPLQQVFQAPRRPGIGTVGKPIKLLANYFEVDIPKIDVYHYEVDIKPDKCPRRVNREVVEYMVQHFKPQIFGDRKPVYDGKKNIYTVTALPIGNERVDFEVTIPGEGKDRIFKVSIKWLAIVSWRMLHEALVSGQIPVPLESVQALDVAMRHLASMRYTPVGRSFFSPPEGYYHPLGGGREVWFGFHQSVRPAMWKMMLNIDVSATAFYKAQPVIEFMCEVLDIRNIDEQPKPLTDSQRVRFTKEIKGLKVEVTHCGQMKRKYRVCNVTRRPASHQTFPLQLESGQTVECTVAQYFKQKYNLQLKYPHLPCLQVGQEQKHTYLPLEVCNIVAGQRCIKKLTDNQTSTMIKATARSAPDRQEEISRLMKNASYNLDPYIQEFGIKVKDDMTEVTGRVLPAPILQYGGRNRAIATPNQGVWDMRGKQFYNGIEIKVWAIACFAPQKQCREEVLKNFTDQLRKISKDAGMPIQGQPCFCKYAQGADSVEPMFRHLKNTYSGLQLIIVILPGKTPVYAEVKRVGDTLLGMATQCVQVKNVVKTSPQTLSNLCLKINVKLGGINNILVPHQRSAVFQQPVIFLGADVTHPPAGDGKKPSITAVVGSMDAHPSRYCATVRVQRPRQEIIEDLSYMVRELLIQFYKSTRFKPTRIIFYRDGVPEGQLPQILHYELLAIRDACIKLEKDYQPGITYIVVQKRHHTRLFCADKNERIGKSGNIPAGTTVDTNITHPFEFDFYLCSHAGIQGTSRPSHYYVLWDDNRFTADELQILTYQLCHTYVRCTRSVSIPAPAYYARLVAFRARYHLVDKEHDSGEGSHISGQSNGRDPQALAKAVQVHQDTLRTMYFA</sequence>
<comment type="function">
    <text evidence="5">Required for RNA-mediated gene silencing (RNAi). Binds to short RNAs such as microRNAs (miRNAs) or short interfering RNAs (siRNAs), and represses the translation of mRNAs which are complementary to them. Lacks endonuclease activity and does not appear to cleave target mRNAs. May also be required for transcriptional gene silencing (TGS) of promoter regions which are complementary to bound short antigene RNAs (agRNAs).</text>
</comment>
<comment type="subunit">
    <text evidence="1">Interacts with DDB1, DDX5, DDX6, DHX30, DHX36, DDX47, DICER1, AGO2, ELAVL1, HNRNPF, IGF2BP1, ILF3, IMP8, MATR3, MOV10, PABPC1, PRMT5, RBM4, SART3, TNRC6B, UPF1 and YBX1. Associates with polysomes and messenger ribonucleoproteins (mNRPs) (By similarity). Interacts with LIMD1, WTIP and AJUBA (By similarity). Interacts with APOBEC3F, APOBEC3G and APOBEC3H (By similarity).</text>
</comment>
<comment type="interaction">
    <interactant intactId="EBI-2291996">
        <id>Q8CJG1</id>
    </interactant>
    <interactant intactId="EBI-773837">
        <id>Q8CH72</id>
        <label>Trim32</label>
    </interactant>
    <organismsDiffer>false</organismsDiffer>
    <experiments>2</experiments>
</comment>
<comment type="subcellular location">
    <subcellularLocation>
        <location evidence="1">Cytoplasm</location>
        <location evidence="1">P-body</location>
    </subcellularLocation>
</comment>
<comment type="PTM">
    <text evidence="2">Ubiquitinated on surface-exposed lysines by a SCF-like E3 ubiquitin-protein ligase complex containing ZSWIM8 during target-directed microRNA degradation (TDMD), a process that mediates degradation of microRNAs (miRNAs). Ubiquitination by the SCF-like E3 ubiquitin-protein ligase complex containing ZSWIM8 leads to its subsequent degradation, thereby exposing miRNAs for degradation. ZSWIM8 recognizes and binds AGO1 when it is engaged with a TDMD target.</text>
</comment>
<comment type="similarity">
    <text evidence="6">Belongs to the argonaute family. Ago subfamily.</text>
</comment>
<reference key="1">
    <citation type="journal article" date="2003" name="Curr. Biol.">
        <title>Short-interfering-RNA-mediated gene silencing in mammalian cells requires Dicer and eIF2C translation initiation factors.</title>
        <authorList>
            <person name="Doi N."/>
            <person name="Zenno S."/>
            <person name="Ueda R."/>
            <person name="Ohki-Hamazaki H."/>
            <person name="Ui-Tei K."/>
            <person name="Saigo K."/>
        </authorList>
    </citation>
    <scope>NUCLEOTIDE SEQUENCE [MRNA]</scope>
</reference>
<reference key="2">
    <citation type="journal article" date="2009" name="PLoS Biol.">
        <title>Lineage-specific biology revealed by a finished genome assembly of the mouse.</title>
        <authorList>
            <person name="Church D.M."/>
            <person name="Goodstadt L."/>
            <person name="Hillier L.W."/>
            <person name="Zody M.C."/>
            <person name="Goldstein S."/>
            <person name="She X."/>
            <person name="Bult C.J."/>
            <person name="Agarwala R."/>
            <person name="Cherry J.L."/>
            <person name="DiCuccio M."/>
            <person name="Hlavina W."/>
            <person name="Kapustin Y."/>
            <person name="Meric P."/>
            <person name="Maglott D."/>
            <person name="Birtle Z."/>
            <person name="Marques A.C."/>
            <person name="Graves T."/>
            <person name="Zhou S."/>
            <person name="Teague B."/>
            <person name="Potamousis K."/>
            <person name="Churas C."/>
            <person name="Place M."/>
            <person name="Herschleb J."/>
            <person name="Runnheim R."/>
            <person name="Forrest D."/>
            <person name="Amos-Landgraf J."/>
            <person name="Schwartz D.C."/>
            <person name="Cheng Z."/>
            <person name="Lindblad-Toh K."/>
            <person name="Eichler E.E."/>
            <person name="Ponting C.P."/>
        </authorList>
    </citation>
    <scope>NUCLEOTIDE SEQUENCE [LARGE SCALE GENOMIC DNA]</scope>
    <source>
        <strain>C57BL/6J</strain>
    </source>
</reference>
<reference key="3">
    <citation type="journal article" date="2004" name="Genome Res.">
        <title>The status, quality, and expansion of the NIH full-length cDNA project: the Mammalian Gene Collection (MGC).</title>
        <authorList>
            <consortium name="The MGC Project Team"/>
        </authorList>
    </citation>
    <scope>NUCLEOTIDE SEQUENCE [LARGE SCALE MRNA]</scope>
</reference>
<reference key="4">
    <citation type="journal article" date="2009" name="Genes Dev.">
        <title>Essential and overlapping functions for mammalian Argonautes in microRNA silencing.</title>
        <authorList>
            <person name="Su H."/>
            <person name="Trombly M.I."/>
            <person name="Chen J."/>
            <person name="Wang X."/>
        </authorList>
    </citation>
    <scope>FUNCTION</scope>
</reference>
<reference key="5">
    <citation type="journal article" date="2010" name="Cell">
        <title>A tissue-specific atlas of mouse protein phosphorylation and expression.</title>
        <authorList>
            <person name="Huttlin E.L."/>
            <person name="Jedrychowski M.P."/>
            <person name="Elias J.E."/>
            <person name="Goswami T."/>
            <person name="Rad R."/>
            <person name="Beausoleil S.A."/>
            <person name="Villen J."/>
            <person name="Haas W."/>
            <person name="Sowa M.E."/>
            <person name="Gygi S.P."/>
        </authorList>
    </citation>
    <scope>IDENTIFICATION BY MASS SPECTROMETRY [LARGE SCALE ANALYSIS]</scope>
    <source>
        <tissue>Lung</tissue>
        <tissue>Spleen</tissue>
    </source>
</reference>
<keyword id="KW-0963">Cytoplasm</keyword>
<keyword id="KW-1185">Reference proteome</keyword>
<keyword id="KW-0678">Repressor</keyword>
<keyword id="KW-0687">Ribonucleoprotein</keyword>
<keyword id="KW-0694">RNA-binding</keyword>
<keyword id="KW-0943">RNA-mediated gene silencing</keyword>
<keyword id="KW-0804">Transcription</keyword>
<keyword id="KW-0805">Transcription regulation</keyword>
<keyword id="KW-0810">Translation regulation</keyword>
<keyword id="KW-0832">Ubl conjugation</keyword>
<organism>
    <name type="scientific">Mus musculus</name>
    <name type="common">Mouse</name>
    <dbReference type="NCBI Taxonomy" id="10090"/>
    <lineage>
        <taxon>Eukaryota</taxon>
        <taxon>Metazoa</taxon>
        <taxon>Chordata</taxon>
        <taxon>Craniata</taxon>
        <taxon>Vertebrata</taxon>
        <taxon>Euteleostomi</taxon>
        <taxon>Mammalia</taxon>
        <taxon>Eutheria</taxon>
        <taxon>Euarchontoglires</taxon>
        <taxon>Glires</taxon>
        <taxon>Rodentia</taxon>
        <taxon>Myomorpha</taxon>
        <taxon>Muroidea</taxon>
        <taxon>Muridae</taxon>
        <taxon>Murinae</taxon>
        <taxon>Mus</taxon>
        <taxon>Mus</taxon>
    </lineage>
</organism>
<accession>Q8CJG1</accession>
<accession>A1L365</accession>
<dbReference type="EMBL" id="AB081471">
    <property type="protein sequence ID" value="BAC15766.1"/>
    <property type="molecule type" value="mRNA"/>
</dbReference>
<dbReference type="EMBL" id="AL606935">
    <property type="status" value="NOT_ANNOTATED_CDS"/>
    <property type="molecule type" value="Genomic_DNA"/>
</dbReference>
<dbReference type="EMBL" id="AL606976">
    <property type="status" value="NOT_ANNOTATED_CDS"/>
    <property type="molecule type" value="Genomic_DNA"/>
</dbReference>
<dbReference type="EMBL" id="BC129914">
    <property type="protein sequence ID" value="AAI29915.1"/>
    <property type="molecule type" value="mRNA"/>
</dbReference>
<dbReference type="CCDS" id="CCDS18653.1"/>
<dbReference type="RefSeq" id="NP_001304102.1">
    <property type="nucleotide sequence ID" value="NM_001317173.1"/>
</dbReference>
<dbReference type="RefSeq" id="NP_700452.2">
    <property type="nucleotide sequence ID" value="NM_153403.3"/>
</dbReference>
<dbReference type="SMR" id="Q8CJG1"/>
<dbReference type="BioGRID" id="231767">
    <property type="interactions" value="34"/>
</dbReference>
<dbReference type="FunCoup" id="Q8CJG1">
    <property type="interactions" value="3190"/>
</dbReference>
<dbReference type="IntAct" id="Q8CJG1">
    <property type="interactions" value="5"/>
</dbReference>
<dbReference type="MINT" id="Q8CJG1"/>
<dbReference type="STRING" id="10090.ENSMUSP00000095498"/>
<dbReference type="GlyGen" id="Q8CJG1">
    <property type="glycosylation" value="1 site, 1 N-linked glycan (1 site)"/>
</dbReference>
<dbReference type="iPTMnet" id="Q8CJG1"/>
<dbReference type="PhosphoSitePlus" id="Q8CJG1"/>
<dbReference type="SwissPalm" id="Q8CJG1"/>
<dbReference type="PaxDb" id="10090-ENSMUSP00000095498"/>
<dbReference type="ProteomicsDB" id="285623"/>
<dbReference type="Pumba" id="Q8CJG1"/>
<dbReference type="Antibodypedia" id="31600">
    <property type="antibodies" value="305 antibodies from 39 providers"/>
</dbReference>
<dbReference type="DNASU" id="236511"/>
<dbReference type="Ensembl" id="ENSMUST00000097888.10">
    <property type="protein sequence ID" value="ENSMUSP00000095498.4"/>
    <property type="gene ID" value="ENSMUSG00000041530.18"/>
</dbReference>
<dbReference type="Ensembl" id="ENSMUST00000239428.2">
    <property type="protein sequence ID" value="ENSMUSP00000159361.2"/>
    <property type="gene ID" value="ENSMUSG00000041530.18"/>
</dbReference>
<dbReference type="GeneID" id="236511"/>
<dbReference type="KEGG" id="mmu:236511"/>
<dbReference type="UCSC" id="uc008utj.2">
    <property type="organism name" value="mouse"/>
</dbReference>
<dbReference type="AGR" id="MGI:2446630"/>
<dbReference type="CTD" id="26523"/>
<dbReference type="MGI" id="MGI:2446630">
    <property type="gene designation" value="Ago1"/>
</dbReference>
<dbReference type="VEuPathDB" id="HostDB:ENSMUSG00000041530"/>
<dbReference type="eggNOG" id="KOG1041">
    <property type="taxonomic scope" value="Eukaryota"/>
</dbReference>
<dbReference type="GeneTree" id="ENSGT00940000158568"/>
<dbReference type="HOGENOM" id="CLU_004544_4_3_1"/>
<dbReference type="InParanoid" id="Q8CJG1"/>
<dbReference type="OMA" id="MGQWPGE"/>
<dbReference type="OrthoDB" id="10252740at2759"/>
<dbReference type="PhylomeDB" id="Q8CJG1"/>
<dbReference type="TreeFam" id="TF101510"/>
<dbReference type="Reactome" id="R-MMU-203927">
    <property type="pathway name" value="MicroRNA (miRNA) biogenesis"/>
</dbReference>
<dbReference type="Reactome" id="R-MMU-426486">
    <property type="pathway name" value="Small interfering RNA (siRNA) biogenesis"/>
</dbReference>
<dbReference type="Reactome" id="R-MMU-426496">
    <property type="pathway name" value="Post-transcriptional silencing by small RNAs"/>
</dbReference>
<dbReference type="BioGRID-ORCS" id="236511">
    <property type="hits" value="3 hits in 77 CRISPR screens"/>
</dbReference>
<dbReference type="CD-CODE" id="CE726F99">
    <property type="entry name" value="Postsynaptic density"/>
</dbReference>
<dbReference type="ChiTaRS" id="Ago1">
    <property type="organism name" value="mouse"/>
</dbReference>
<dbReference type="PRO" id="PR:Q8CJG1"/>
<dbReference type="Proteomes" id="UP000000589">
    <property type="component" value="Chromosome 4"/>
</dbReference>
<dbReference type="RNAct" id="Q8CJG1">
    <property type="molecule type" value="protein"/>
</dbReference>
<dbReference type="Bgee" id="ENSMUSG00000041530">
    <property type="expression patterns" value="Expressed in floor plate of midbrain and 239 other cell types or tissues"/>
</dbReference>
<dbReference type="ExpressionAtlas" id="Q8CJG1">
    <property type="expression patterns" value="baseline and differential"/>
</dbReference>
<dbReference type="GO" id="GO:0005737">
    <property type="term" value="C:cytoplasm"/>
    <property type="evidence" value="ECO:0000250"/>
    <property type="project" value="UniProtKB"/>
</dbReference>
<dbReference type="GO" id="GO:0005829">
    <property type="term" value="C:cytosol"/>
    <property type="evidence" value="ECO:0000314"/>
    <property type="project" value="MGI"/>
</dbReference>
<dbReference type="GO" id="GO:0005634">
    <property type="term" value="C:nucleus"/>
    <property type="evidence" value="ECO:0000314"/>
    <property type="project" value="MGI"/>
</dbReference>
<dbReference type="GO" id="GO:0000932">
    <property type="term" value="C:P-body"/>
    <property type="evidence" value="ECO:0000314"/>
    <property type="project" value="MGI"/>
</dbReference>
<dbReference type="GO" id="GO:0016442">
    <property type="term" value="C:RISC complex"/>
    <property type="evidence" value="ECO:0000314"/>
    <property type="project" value="MGI"/>
</dbReference>
<dbReference type="GO" id="GO:0070578">
    <property type="term" value="C:RISC-loading complex"/>
    <property type="evidence" value="ECO:0007669"/>
    <property type="project" value="Ensembl"/>
</dbReference>
<dbReference type="GO" id="GO:0001046">
    <property type="term" value="F:core promoter sequence-specific DNA binding"/>
    <property type="evidence" value="ECO:0007669"/>
    <property type="project" value="Ensembl"/>
</dbReference>
<dbReference type="GO" id="GO:0003725">
    <property type="term" value="F:double-stranded RNA binding"/>
    <property type="evidence" value="ECO:0007669"/>
    <property type="project" value="Ensembl"/>
</dbReference>
<dbReference type="GO" id="GO:0035198">
    <property type="term" value="F:miRNA binding"/>
    <property type="evidence" value="ECO:0000314"/>
    <property type="project" value="MGI"/>
</dbReference>
<dbReference type="GO" id="GO:0003723">
    <property type="term" value="F:RNA binding"/>
    <property type="evidence" value="ECO:0000314"/>
    <property type="project" value="MGI"/>
</dbReference>
<dbReference type="GO" id="GO:0000978">
    <property type="term" value="F:RNA polymerase II cis-regulatory region sequence-specific DNA binding"/>
    <property type="evidence" value="ECO:0000314"/>
    <property type="project" value="MGI"/>
</dbReference>
<dbReference type="GO" id="GO:0000993">
    <property type="term" value="F:RNA polymerase II complex binding"/>
    <property type="evidence" value="ECO:0007669"/>
    <property type="project" value="Ensembl"/>
</dbReference>
<dbReference type="GO" id="GO:0003727">
    <property type="term" value="F:single-stranded RNA binding"/>
    <property type="evidence" value="ECO:0007669"/>
    <property type="project" value="Ensembl"/>
</dbReference>
<dbReference type="GO" id="GO:0000976">
    <property type="term" value="F:transcription cis-regulatory region binding"/>
    <property type="evidence" value="ECO:0000315"/>
    <property type="project" value="BHF-UCL"/>
</dbReference>
<dbReference type="GO" id="GO:0010586">
    <property type="term" value="P:miRNA metabolic process"/>
    <property type="evidence" value="ECO:0000314"/>
    <property type="project" value="MGI"/>
</dbReference>
<dbReference type="GO" id="GO:0035278">
    <property type="term" value="P:miRNA-mediated gene silencing by inhibition of translation"/>
    <property type="evidence" value="ECO:0000250"/>
    <property type="project" value="UniProtKB"/>
</dbReference>
<dbReference type="GO" id="GO:0016525">
    <property type="term" value="P:negative regulation of angiogenesis"/>
    <property type="evidence" value="ECO:0007669"/>
    <property type="project" value="Ensembl"/>
</dbReference>
<dbReference type="GO" id="GO:0000956">
    <property type="term" value="P:nuclear-transcribed mRNA catabolic process"/>
    <property type="evidence" value="ECO:0000250"/>
    <property type="project" value="UniProtKB"/>
</dbReference>
<dbReference type="GO" id="GO:0010628">
    <property type="term" value="P:positive regulation of gene expression"/>
    <property type="evidence" value="ECO:0000315"/>
    <property type="project" value="BHF-UCL"/>
</dbReference>
<dbReference type="GO" id="GO:1901224">
    <property type="term" value="P:positive regulation of non-canonical NF-kappaB signal transduction"/>
    <property type="evidence" value="ECO:0000315"/>
    <property type="project" value="BHF-UCL"/>
</dbReference>
<dbReference type="GO" id="GO:0045944">
    <property type="term" value="P:positive regulation of transcription by RNA polymerase II"/>
    <property type="evidence" value="ECO:0000314"/>
    <property type="project" value="MGI"/>
</dbReference>
<dbReference type="GO" id="GO:0031054">
    <property type="term" value="P:pre-miRNA processing"/>
    <property type="evidence" value="ECO:0007669"/>
    <property type="project" value="Ensembl"/>
</dbReference>
<dbReference type="GO" id="GO:0043488">
    <property type="term" value="P:regulation of mRNA stability"/>
    <property type="evidence" value="ECO:0007669"/>
    <property type="project" value="Ensembl"/>
</dbReference>
<dbReference type="GO" id="GO:0070922">
    <property type="term" value="P:RISC complex assembly"/>
    <property type="evidence" value="ECO:0007669"/>
    <property type="project" value="Ensembl"/>
</dbReference>
<dbReference type="CDD" id="cd02846">
    <property type="entry name" value="PAZ_argonaute_like"/>
    <property type="match status" value="1"/>
</dbReference>
<dbReference type="CDD" id="cd04657">
    <property type="entry name" value="Piwi_ago-like"/>
    <property type="match status" value="1"/>
</dbReference>
<dbReference type="FunFam" id="2.170.260.10:FF:000001">
    <property type="entry name" value="Protein argonaute-2"/>
    <property type="match status" value="1"/>
</dbReference>
<dbReference type="FunFam" id="3.30.420.10:FF:000001">
    <property type="entry name" value="Protein argonaute-2"/>
    <property type="match status" value="1"/>
</dbReference>
<dbReference type="FunFam" id="3.40.50.2300:FF:000005">
    <property type="entry name" value="Protein argonaute-2"/>
    <property type="match status" value="1"/>
</dbReference>
<dbReference type="Gene3D" id="3.40.50.2300">
    <property type="match status" value="1"/>
</dbReference>
<dbReference type="Gene3D" id="2.170.260.10">
    <property type="entry name" value="paz domain"/>
    <property type="match status" value="1"/>
</dbReference>
<dbReference type="Gene3D" id="3.30.420.10">
    <property type="entry name" value="Ribonuclease H-like superfamily/Ribonuclease H"/>
    <property type="match status" value="1"/>
</dbReference>
<dbReference type="InterPro" id="IPR014811">
    <property type="entry name" value="ArgoL1"/>
</dbReference>
<dbReference type="InterPro" id="IPR032472">
    <property type="entry name" value="ArgoL2"/>
</dbReference>
<dbReference type="InterPro" id="IPR032473">
    <property type="entry name" value="Argonaute_Mid_dom"/>
</dbReference>
<dbReference type="InterPro" id="IPR032474">
    <property type="entry name" value="Argonaute_N"/>
</dbReference>
<dbReference type="InterPro" id="IPR003100">
    <property type="entry name" value="PAZ_dom"/>
</dbReference>
<dbReference type="InterPro" id="IPR036085">
    <property type="entry name" value="PAZ_dom_sf"/>
</dbReference>
<dbReference type="InterPro" id="IPR003165">
    <property type="entry name" value="Piwi"/>
</dbReference>
<dbReference type="InterPro" id="IPR045246">
    <property type="entry name" value="Piwi_ago-like"/>
</dbReference>
<dbReference type="InterPro" id="IPR012337">
    <property type="entry name" value="RNaseH-like_sf"/>
</dbReference>
<dbReference type="InterPro" id="IPR036397">
    <property type="entry name" value="RNaseH_sf"/>
</dbReference>
<dbReference type="PANTHER" id="PTHR22891">
    <property type="entry name" value="EUKARYOTIC TRANSLATION INITIATION FACTOR 2C"/>
    <property type="match status" value="1"/>
</dbReference>
<dbReference type="Pfam" id="PF08699">
    <property type="entry name" value="ArgoL1"/>
    <property type="match status" value="1"/>
</dbReference>
<dbReference type="Pfam" id="PF16488">
    <property type="entry name" value="ArgoL2"/>
    <property type="match status" value="1"/>
</dbReference>
<dbReference type="Pfam" id="PF16487">
    <property type="entry name" value="ArgoMid"/>
    <property type="match status" value="1"/>
</dbReference>
<dbReference type="Pfam" id="PF16486">
    <property type="entry name" value="ArgoN"/>
    <property type="match status" value="1"/>
</dbReference>
<dbReference type="Pfam" id="PF02170">
    <property type="entry name" value="PAZ"/>
    <property type="match status" value="1"/>
</dbReference>
<dbReference type="Pfam" id="PF02171">
    <property type="entry name" value="Piwi"/>
    <property type="match status" value="1"/>
</dbReference>
<dbReference type="SMART" id="SM01163">
    <property type="entry name" value="DUF1785"/>
    <property type="match status" value="1"/>
</dbReference>
<dbReference type="SMART" id="SM00949">
    <property type="entry name" value="PAZ"/>
    <property type="match status" value="1"/>
</dbReference>
<dbReference type="SMART" id="SM00950">
    <property type="entry name" value="Piwi"/>
    <property type="match status" value="1"/>
</dbReference>
<dbReference type="SUPFAM" id="SSF101690">
    <property type="entry name" value="PAZ domain"/>
    <property type="match status" value="1"/>
</dbReference>
<dbReference type="SUPFAM" id="SSF53098">
    <property type="entry name" value="Ribonuclease H-like"/>
    <property type="match status" value="1"/>
</dbReference>
<dbReference type="PROSITE" id="PS50821">
    <property type="entry name" value="PAZ"/>
    <property type="match status" value="1"/>
</dbReference>
<dbReference type="PROSITE" id="PS50822">
    <property type="entry name" value="PIWI"/>
    <property type="match status" value="1"/>
</dbReference>
<name>AGO1_MOUSE</name>
<protein>
    <recommendedName>
        <fullName>Protein argonaute-1</fullName>
        <shortName>Argonaute1</shortName>
        <shortName>mAgo1</shortName>
    </recommendedName>
    <alternativeName>
        <fullName>Argonaute RISC catalytic component 1</fullName>
    </alternativeName>
    <alternativeName>
        <fullName>Eukaryotic translation initiation factor 2C 1</fullName>
        <shortName>eIF-2C 1</shortName>
        <shortName>eIF2C 1</shortName>
    </alternativeName>
    <alternativeName>
        <fullName>Piwi/argonaute family protein meIF2C1</fullName>
    </alternativeName>
</protein>
<feature type="chain" id="PRO_0000194056" description="Protein argonaute-1">
    <location>
        <begin position="1"/>
        <end position="857"/>
    </location>
</feature>
<feature type="domain" description="PAZ" evidence="3">
    <location>
        <begin position="227"/>
        <end position="346"/>
    </location>
</feature>
<feature type="domain" description="Piwi" evidence="4">
    <location>
        <begin position="515"/>
        <end position="816"/>
    </location>
</feature>
<feature type="region of interest" description="Interaction with guide RNA" evidence="1">
    <location>
        <begin position="309"/>
        <end position="314"/>
    </location>
</feature>
<feature type="region of interest" description="Interaction with guide RNA" evidence="1">
    <location>
        <begin position="522"/>
        <end position="564"/>
    </location>
</feature>
<feature type="region of interest" description="Impairs access of bound RNA to the active site" evidence="1">
    <location>
        <begin position="670"/>
        <end position="675"/>
    </location>
</feature>
<feature type="region of interest" description="Interaction with guide RNA" evidence="1">
    <location>
        <begin position="708"/>
        <end position="712"/>
    </location>
</feature>
<feature type="region of interest" description="Interaction with guide RNA" evidence="1">
    <location>
        <begin position="751"/>
        <end position="759"/>
    </location>
</feature>
<feature type="region of interest" description="Interaction with guide RNA" evidence="1">
    <location>
        <begin position="788"/>
        <end position="813"/>
    </location>
</feature>
<feature type="sequence conflict" description="In Ref. 1; BAC15766." evidence="6" ref="1">
    <original>K</original>
    <variation>E</variation>
    <location>
        <position position="96"/>
    </location>
</feature>
<feature type="sequence conflict" description="In Ref. 1; BAC15766." evidence="6" ref="1">
    <original>Y</original>
    <variation>H</variation>
    <location>
        <position position="309"/>
    </location>
</feature>
<feature type="sequence conflict" description="In Ref. 1; BAC15766." evidence="6" ref="1">
    <original>Y</original>
    <variation>C</variation>
    <location>
        <position position="386"/>
    </location>
</feature>
<feature type="sequence conflict" description="In Ref. 1; BAC15766." evidence="6" ref="1">
    <original>V</original>
    <variation>A</variation>
    <location>
        <position position="550"/>
    </location>
</feature>